<dbReference type="EC" id="1.8.4.12" evidence="1"/>
<dbReference type="EMBL" id="AE005674">
    <property type="protein sequence ID" value="AAN43043.1"/>
    <property type="molecule type" value="Genomic_DNA"/>
</dbReference>
<dbReference type="EMBL" id="AE014073">
    <property type="protein sequence ID" value="AAP16938.1"/>
    <property type="molecule type" value="Genomic_DNA"/>
</dbReference>
<dbReference type="RefSeq" id="WP_001284613.1">
    <property type="nucleotide sequence ID" value="NZ_WPGW01000090.1"/>
</dbReference>
<dbReference type="SMR" id="Q83L66"/>
<dbReference type="STRING" id="198214.SF1445"/>
<dbReference type="PaxDb" id="198214-SF1445"/>
<dbReference type="KEGG" id="sfl:SF1445"/>
<dbReference type="KEGG" id="sfx:S1560"/>
<dbReference type="PATRIC" id="fig|198214.7.peg.1701"/>
<dbReference type="HOGENOM" id="CLU_031040_8_5_6"/>
<dbReference type="Proteomes" id="UP000001006">
    <property type="component" value="Chromosome"/>
</dbReference>
<dbReference type="Proteomes" id="UP000002673">
    <property type="component" value="Chromosome"/>
</dbReference>
<dbReference type="GO" id="GO:0005737">
    <property type="term" value="C:cytoplasm"/>
    <property type="evidence" value="ECO:0007669"/>
    <property type="project" value="TreeGrafter"/>
</dbReference>
<dbReference type="GO" id="GO:0033743">
    <property type="term" value="F:peptide-methionine (R)-S-oxide reductase activity"/>
    <property type="evidence" value="ECO:0007669"/>
    <property type="project" value="UniProtKB-UniRule"/>
</dbReference>
<dbReference type="GO" id="GO:0008270">
    <property type="term" value="F:zinc ion binding"/>
    <property type="evidence" value="ECO:0007669"/>
    <property type="project" value="UniProtKB-UniRule"/>
</dbReference>
<dbReference type="GO" id="GO:0030091">
    <property type="term" value="P:protein repair"/>
    <property type="evidence" value="ECO:0007669"/>
    <property type="project" value="InterPro"/>
</dbReference>
<dbReference type="GO" id="GO:0006979">
    <property type="term" value="P:response to oxidative stress"/>
    <property type="evidence" value="ECO:0007669"/>
    <property type="project" value="InterPro"/>
</dbReference>
<dbReference type="FunFam" id="2.170.150.20:FF:000001">
    <property type="entry name" value="Peptide methionine sulfoxide reductase MsrB"/>
    <property type="match status" value="1"/>
</dbReference>
<dbReference type="Gene3D" id="2.170.150.20">
    <property type="entry name" value="Peptide methionine sulfoxide reductase"/>
    <property type="match status" value="1"/>
</dbReference>
<dbReference type="HAMAP" id="MF_01400">
    <property type="entry name" value="MsrB"/>
    <property type="match status" value="1"/>
</dbReference>
<dbReference type="InterPro" id="IPR028427">
    <property type="entry name" value="Met_Sox_Rdtase_MsrB"/>
</dbReference>
<dbReference type="InterPro" id="IPR002579">
    <property type="entry name" value="Met_Sox_Rdtase_MsrB_dom"/>
</dbReference>
<dbReference type="InterPro" id="IPR011057">
    <property type="entry name" value="Mss4-like_sf"/>
</dbReference>
<dbReference type="NCBIfam" id="TIGR00357">
    <property type="entry name" value="peptide-methionine (R)-S-oxide reductase MsrB"/>
    <property type="match status" value="1"/>
</dbReference>
<dbReference type="PANTHER" id="PTHR10173">
    <property type="entry name" value="METHIONINE SULFOXIDE REDUCTASE"/>
    <property type="match status" value="1"/>
</dbReference>
<dbReference type="PANTHER" id="PTHR10173:SF52">
    <property type="entry name" value="METHIONINE-R-SULFOXIDE REDUCTASE B1"/>
    <property type="match status" value="1"/>
</dbReference>
<dbReference type="Pfam" id="PF01641">
    <property type="entry name" value="SelR"/>
    <property type="match status" value="1"/>
</dbReference>
<dbReference type="SUPFAM" id="SSF51316">
    <property type="entry name" value="Mss4-like"/>
    <property type="match status" value="1"/>
</dbReference>
<dbReference type="PROSITE" id="PS51790">
    <property type="entry name" value="MSRB"/>
    <property type="match status" value="1"/>
</dbReference>
<accession>Q83L66</accession>
<accession>Q7C1P9</accession>
<keyword id="KW-0479">Metal-binding</keyword>
<keyword id="KW-0560">Oxidoreductase</keyword>
<keyword id="KW-1185">Reference proteome</keyword>
<keyword id="KW-0862">Zinc</keyword>
<organism>
    <name type="scientific">Shigella flexneri</name>
    <dbReference type="NCBI Taxonomy" id="623"/>
    <lineage>
        <taxon>Bacteria</taxon>
        <taxon>Pseudomonadati</taxon>
        <taxon>Pseudomonadota</taxon>
        <taxon>Gammaproteobacteria</taxon>
        <taxon>Enterobacterales</taxon>
        <taxon>Enterobacteriaceae</taxon>
        <taxon>Shigella</taxon>
    </lineage>
</organism>
<reference key="1">
    <citation type="journal article" date="2002" name="Nucleic Acids Res.">
        <title>Genome sequence of Shigella flexneri 2a: insights into pathogenicity through comparison with genomes of Escherichia coli K12 and O157.</title>
        <authorList>
            <person name="Jin Q."/>
            <person name="Yuan Z."/>
            <person name="Xu J."/>
            <person name="Wang Y."/>
            <person name="Shen Y."/>
            <person name="Lu W."/>
            <person name="Wang J."/>
            <person name="Liu H."/>
            <person name="Yang J."/>
            <person name="Yang F."/>
            <person name="Zhang X."/>
            <person name="Zhang J."/>
            <person name="Yang G."/>
            <person name="Wu H."/>
            <person name="Qu D."/>
            <person name="Dong J."/>
            <person name="Sun L."/>
            <person name="Xue Y."/>
            <person name="Zhao A."/>
            <person name="Gao Y."/>
            <person name="Zhu J."/>
            <person name="Kan B."/>
            <person name="Ding K."/>
            <person name="Chen S."/>
            <person name="Cheng H."/>
            <person name="Yao Z."/>
            <person name="He B."/>
            <person name="Chen R."/>
            <person name="Ma D."/>
            <person name="Qiang B."/>
            <person name="Wen Y."/>
            <person name="Hou Y."/>
            <person name="Yu J."/>
        </authorList>
    </citation>
    <scope>NUCLEOTIDE SEQUENCE [LARGE SCALE GENOMIC DNA]</scope>
    <source>
        <strain>301 / Serotype 2a</strain>
    </source>
</reference>
<reference key="2">
    <citation type="journal article" date="2003" name="Infect. Immun.">
        <title>Complete genome sequence and comparative genomics of Shigella flexneri serotype 2a strain 2457T.</title>
        <authorList>
            <person name="Wei J."/>
            <person name="Goldberg M.B."/>
            <person name="Burland V."/>
            <person name="Venkatesan M.M."/>
            <person name="Deng W."/>
            <person name="Fournier G."/>
            <person name="Mayhew G.F."/>
            <person name="Plunkett G. III"/>
            <person name="Rose D.J."/>
            <person name="Darling A."/>
            <person name="Mau B."/>
            <person name="Perna N.T."/>
            <person name="Payne S.M."/>
            <person name="Runyen-Janecky L.J."/>
            <person name="Zhou S."/>
            <person name="Schwartz D.C."/>
            <person name="Blattner F.R."/>
        </authorList>
    </citation>
    <scope>NUCLEOTIDE SEQUENCE [LARGE SCALE GENOMIC DNA]</scope>
    <source>
        <strain>ATCC 700930 / 2457T / Serotype 2a</strain>
    </source>
</reference>
<sequence length="137" mass="15452">MANKPSAEELKKNLSEMQFYVTQNHGTEPPFTGRLLHNKRDGVYHCLICDAPLFHSETKYDSGCGWPSFYEPVSEESIRYIKDLSHGMQRIEIRCGNCDAHLGHVFPDGPQPTGERYCVNSASLRFTDGENGEEING</sequence>
<gene>
    <name evidence="1" type="primary">msrB</name>
    <name type="ordered locus">SF1445</name>
    <name type="ordered locus">S1560</name>
</gene>
<proteinExistence type="inferred from homology"/>
<evidence type="ECO:0000255" key="1">
    <source>
        <dbReference type="HAMAP-Rule" id="MF_01400"/>
    </source>
</evidence>
<evidence type="ECO:0000255" key="2">
    <source>
        <dbReference type="PROSITE-ProRule" id="PRU01126"/>
    </source>
</evidence>
<comment type="catalytic activity">
    <reaction evidence="1">
        <text>L-methionyl-[protein] + [thioredoxin]-disulfide + H2O = L-methionyl-(R)-S-oxide-[protein] + [thioredoxin]-dithiol</text>
        <dbReference type="Rhea" id="RHEA:24164"/>
        <dbReference type="Rhea" id="RHEA-COMP:10698"/>
        <dbReference type="Rhea" id="RHEA-COMP:10700"/>
        <dbReference type="Rhea" id="RHEA-COMP:12313"/>
        <dbReference type="Rhea" id="RHEA-COMP:12314"/>
        <dbReference type="ChEBI" id="CHEBI:15377"/>
        <dbReference type="ChEBI" id="CHEBI:16044"/>
        <dbReference type="ChEBI" id="CHEBI:29950"/>
        <dbReference type="ChEBI" id="CHEBI:45764"/>
        <dbReference type="ChEBI" id="CHEBI:50058"/>
        <dbReference type="EC" id="1.8.4.12"/>
    </reaction>
</comment>
<comment type="cofactor">
    <cofactor evidence="1">
        <name>Zn(2+)</name>
        <dbReference type="ChEBI" id="CHEBI:29105"/>
    </cofactor>
    <text evidence="1">Binds 1 zinc ion per subunit. The zinc ion is important for the structural integrity of the protein.</text>
</comment>
<comment type="similarity">
    <text evidence="1">Belongs to the MsrB Met sulfoxide reductase family.</text>
</comment>
<protein>
    <recommendedName>
        <fullName evidence="1">Peptide methionine sulfoxide reductase MsrB</fullName>
        <ecNumber evidence="1">1.8.4.12</ecNumber>
    </recommendedName>
    <alternativeName>
        <fullName evidence="1">Peptide-methionine (R)-S-oxide reductase</fullName>
    </alternativeName>
</protein>
<feature type="chain" id="PRO_0000140294" description="Peptide methionine sulfoxide reductase MsrB">
    <location>
        <begin position="1"/>
        <end position="137"/>
    </location>
</feature>
<feature type="domain" description="MsrB" evidence="2">
    <location>
        <begin position="7"/>
        <end position="129"/>
    </location>
</feature>
<feature type="active site" description="Nucleophile" evidence="2">
    <location>
        <position position="118"/>
    </location>
</feature>
<feature type="binding site" evidence="2">
    <location>
        <position position="46"/>
    </location>
    <ligand>
        <name>Zn(2+)</name>
        <dbReference type="ChEBI" id="CHEBI:29105"/>
    </ligand>
</feature>
<feature type="binding site" evidence="2">
    <location>
        <position position="49"/>
    </location>
    <ligand>
        <name>Zn(2+)</name>
        <dbReference type="ChEBI" id="CHEBI:29105"/>
    </ligand>
</feature>
<feature type="binding site" evidence="2">
    <location>
        <position position="95"/>
    </location>
    <ligand>
        <name>Zn(2+)</name>
        <dbReference type="ChEBI" id="CHEBI:29105"/>
    </ligand>
</feature>
<feature type="binding site" evidence="2">
    <location>
        <position position="98"/>
    </location>
    <ligand>
        <name>Zn(2+)</name>
        <dbReference type="ChEBI" id="CHEBI:29105"/>
    </ligand>
</feature>
<name>MSRB_SHIFL</name>